<gene>
    <name evidence="1" type="primary">gatB</name>
    <name type="ordered locus">BBta_4709</name>
</gene>
<protein>
    <recommendedName>
        <fullName evidence="1">Aspartyl/glutamyl-tRNA(Asn/Gln) amidotransferase subunit B</fullName>
        <shortName evidence="1">Asp/Glu-ADT subunit B</shortName>
        <ecNumber evidence="1">6.3.5.-</ecNumber>
    </recommendedName>
</protein>
<reference key="1">
    <citation type="journal article" date="2007" name="Science">
        <title>Legumes symbioses: absence of nod genes in photosynthetic bradyrhizobia.</title>
        <authorList>
            <person name="Giraud E."/>
            <person name="Moulin L."/>
            <person name="Vallenet D."/>
            <person name="Barbe V."/>
            <person name="Cytryn E."/>
            <person name="Avarre J.-C."/>
            <person name="Jaubert M."/>
            <person name="Simon D."/>
            <person name="Cartieaux F."/>
            <person name="Prin Y."/>
            <person name="Bena G."/>
            <person name="Hannibal L."/>
            <person name="Fardoux J."/>
            <person name="Kojadinovic M."/>
            <person name="Vuillet L."/>
            <person name="Lajus A."/>
            <person name="Cruveiller S."/>
            <person name="Rouy Z."/>
            <person name="Mangenot S."/>
            <person name="Segurens B."/>
            <person name="Dossat C."/>
            <person name="Franck W.L."/>
            <person name="Chang W.-S."/>
            <person name="Saunders E."/>
            <person name="Bruce D."/>
            <person name="Richardson P."/>
            <person name="Normand P."/>
            <person name="Dreyfus B."/>
            <person name="Pignol D."/>
            <person name="Stacey G."/>
            <person name="Emerich D."/>
            <person name="Vermeglio A."/>
            <person name="Medigue C."/>
            <person name="Sadowsky M."/>
        </authorList>
    </citation>
    <scope>NUCLEOTIDE SEQUENCE [LARGE SCALE GENOMIC DNA]</scope>
    <source>
        <strain>BTAi1 / ATCC BAA-1182</strain>
    </source>
</reference>
<keyword id="KW-0067">ATP-binding</keyword>
<keyword id="KW-0436">Ligase</keyword>
<keyword id="KW-0547">Nucleotide-binding</keyword>
<keyword id="KW-0648">Protein biosynthesis</keyword>
<keyword id="KW-1185">Reference proteome</keyword>
<sequence>MTATSGKLMKGATGDWEVVIGMEIHAQVTSKSKLFSGASTAFGGDPNSHVSLVDVAMPGMLPVINEECVRQAVRTGLGLNAKINLRSVFDRKNYFYPDLPQGYQISQYKDPIVGEGEVTVELDGGKTATIGIERLHLEQDPGKMLHDQSPSLSYIDYNRCGVALMEIVSKPDIRDAEQAKAYVTKLRSILRYLGTCDGDMEKGSLRADVNVSVRKPGGPLGTRCEIKNINSISFIGQAVEAEARRQIEIIEDGGTIEQETRRFDPDKGETRSMRSKEEAHDYRYFPDPDLLPLEFDQAFVDALKAALPELPDQKKARFIADFGLSPYDASVLVAERESAAFYESVLEALSDRGRDGKLAANWVINELFGRLNKEGRDIASSPVSSAQLAAIVALIGEGTISGKIAKDLFEIVWSEGGDPRELVESRGMKQVTDLGAIEKVVDEIIAANPDKVAQAKAKPQLAGWFVGQVMKSSGGKANPQAVNDLLKSKLGI</sequence>
<organism>
    <name type="scientific">Bradyrhizobium sp. (strain BTAi1 / ATCC BAA-1182)</name>
    <dbReference type="NCBI Taxonomy" id="288000"/>
    <lineage>
        <taxon>Bacteria</taxon>
        <taxon>Pseudomonadati</taxon>
        <taxon>Pseudomonadota</taxon>
        <taxon>Alphaproteobacteria</taxon>
        <taxon>Hyphomicrobiales</taxon>
        <taxon>Nitrobacteraceae</taxon>
        <taxon>Bradyrhizobium</taxon>
    </lineage>
</organism>
<accession>A5EKP2</accession>
<comment type="function">
    <text evidence="1">Allows the formation of correctly charged Asn-tRNA(Asn) or Gln-tRNA(Gln) through the transamidation of misacylated Asp-tRNA(Asn) or Glu-tRNA(Gln) in organisms which lack either or both of asparaginyl-tRNA or glutaminyl-tRNA synthetases. The reaction takes place in the presence of glutamine and ATP through an activated phospho-Asp-tRNA(Asn) or phospho-Glu-tRNA(Gln).</text>
</comment>
<comment type="catalytic activity">
    <reaction evidence="1">
        <text>L-glutamyl-tRNA(Gln) + L-glutamine + ATP + H2O = L-glutaminyl-tRNA(Gln) + L-glutamate + ADP + phosphate + H(+)</text>
        <dbReference type="Rhea" id="RHEA:17521"/>
        <dbReference type="Rhea" id="RHEA-COMP:9681"/>
        <dbReference type="Rhea" id="RHEA-COMP:9684"/>
        <dbReference type="ChEBI" id="CHEBI:15377"/>
        <dbReference type="ChEBI" id="CHEBI:15378"/>
        <dbReference type="ChEBI" id="CHEBI:29985"/>
        <dbReference type="ChEBI" id="CHEBI:30616"/>
        <dbReference type="ChEBI" id="CHEBI:43474"/>
        <dbReference type="ChEBI" id="CHEBI:58359"/>
        <dbReference type="ChEBI" id="CHEBI:78520"/>
        <dbReference type="ChEBI" id="CHEBI:78521"/>
        <dbReference type="ChEBI" id="CHEBI:456216"/>
    </reaction>
</comment>
<comment type="catalytic activity">
    <reaction evidence="1">
        <text>L-aspartyl-tRNA(Asn) + L-glutamine + ATP + H2O = L-asparaginyl-tRNA(Asn) + L-glutamate + ADP + phosphate + 2 H(+)</text>
        <dbReference type="Rhea" id="RHEA:14513"/>
        <dbReference type="Rhea" id="RHEA-COMP:9674"/>
        <dbReference type="Rhea" id="RHEA-COMP:9677"/>
        <dbReference type="ChEBI" id="CHEBI:15377"/>
        <dbReference type="ChEBI" id="CHEBI:15378"/>
        <dbReference type="ChEBI" id="CHEBI:29985"/>
        <dbReference type="ChEBI" id="CHEBI:30616"/>
        <dbReference type="ChEBI" id="CHEBI:43474"/>
        <dbReference type="ChEBI" id="CHEBI:58359"/>
        <dbReference type="ChEBI" id="CHEBI:78515"/>
        <dbReference type="ChEBI" id="CHEBI:78516"/>
        <dbReference type="ChEBI" id="CHEBI:456216"/>
    </reaction>
</comment>
<comment type="subunit">
    <text evidence="1">Heterotrimer of A, B and C subunits.</text>
</comment>
<comment type="similarity">
    <text evidence="1">Belongs to the GatB/GatE family. GatB subfamily.</text>
</comment>
<evidence type="ECO:0000255" key="1">
    <source>
        <dbReference type="HAMAP-Rule" id="MF_00121"/>
    </source>
</evidence>
<proteinExistence type="inferred from homology"/>
<dbReference type="EC" id="6.3.5.-" evidence="1"/>
<dbReference type="EMBL" id="CP000494">
    <property type="protein sequence ID" value="ABQ36736.1"/>
    <property type="molecule type" value="Genomic_DNA"/>
</dbReference>
<dbReference type="RefSeq" id="WP_012044722.1">
    <property type="nucleotide sequence ID" value="NC_009485.1"/>
</dbReference>
<dbReference type="SMR" id="A5EKP2"/>
<dbReference type="STRING" id="288000.BBta_4709"/>
<dbReference type="KEGG" id="bbt:BBta_4709"/>
<dbReference type="eggNOG" id="COG0064">
    <property type="taxonomic scope" value="Bacteria"/>
</dbReference>
<dbReference type="HOGENOM" id="CLU_019240_0_0_5"/>
<dbReference type="OrthoDB" id="9804078at2"/>
<dbReference type="Proteomes" id="UP000000246">
    <property type="component" value="Chromosome"/>
</dbReference>
<dbReference type="GO" id="GO:0050566">
    <property type="term" value="F:asparaginyl-tRNA synthase (glutamine-hydrolyzing) activity"/>
    <property type="evidence" value="ECO:0007669"/>
    <property type="project" value="RHEA"/>
</dbReference>
<dbReference type="GO" id="GO:0005524">
    <property type="term" value="F:ATP binding"/>
    <property type="evidence" value="ECO:0007669"/>
    <property type="project" value="UniProtKB-KW"/>
</dbReference>
<dbReference type="GO" id="GO:0050567">
    <property type="term" value="F:glutaminyl-tRNA synthase (glutamine-hydrolyzing) activity"/>
    <property type="evidence" value="ECO:0007669"/>
    <property type="project" value="UniProtKB-UniRule"/>
</dbReference>
<dbReference type="GO" id="GO:0070681">
    <property type="term" value="P:glutaminyl-tRNAGln biosynthesis via transamidation"/>
    <property type="evidence" value="ECO:0007669"/>
    <property type="project" value="TreeGrafter"/>
</dbReference>
<dbReference type="GO" id="GO:0006412">
    <property type="term" value="P:translation"/>
    <property type="evidence" value="ECO:0007669"/>
    <property type="project" value="UniProtKB-UniRule"/>
</dbReference>
<dbReference type="FunFam" id="1.10.10.410:FF:000001">
    <property type="entry name" value="Aspartyl/glutamyl-tRNA(Asn/Gln) amidotransferase subunit B"/>
    <property type="match status" value="1"/>
</dbReference>
<dbReference type="FunFam" id="1.10.150.380:FF:000001">
    <property type="entry name" value="Aspartyl/glutamyl-tRNA(Asn/Gln) amidotransferase subunit B"/>
    <property type="match status" value="1"/>
</dbReference>
<dbReference type="Gene3D" id="1.10.10.410">
    <property type="match status" value="1"/>
</dbReference>
<dbReference type="Gene3D" id="1.10.150.380">
    <property type="entry name" value="GatB domain, N-terminal subdomain"/>
    <property type="match status" value="1"/>
</dbReference>
<dbReference type="HAMAP" id="MF_00121">
    <property type="entry name" value="GatB"/>
    <property type="match status" value="1"/>
</dbReference>
<dbReference type="InterPro" id="IPR017959">
    <property type="entry name" value="Asn/Gln-tRNA_amidoTrfase_suB/E"/>
</dbReference>
<dbReference type="InterPro" id="IPR006075">
    <property type="entry name" value="Asn/Gln-tRNA_Trfase_suB/E_cat"/>
</dbReference>
<dbReference type="InterPro" id="IPR018027">
    <property type="entry name" value="Asn/Gln_amidotransferase"/>
</dbReference>
<dbReference type="InterPro" id="IPR003789">
    <property type="entry name" value="Asn/Gln_tRNA_amidoTrase-B-like"/>
</dbReference>
<dbReference type="InterPro" id="IPR004413">
    <property type="entry name" value="GatB"/>
</dbReference>
<dbReference type="InterPro" id="IPR042114">
    <property type="entry name" value="GatB_C_1"/>
</dbReference>
<dbReference type="InterPro" id="IPR023168">
    <property type="entry name" value="GatB_Yqey_C_2"/>
</dbReference>
<dbReference type="InterPro" id="IPR017958">
    <property type="entry name" value="Gln-tRNA_amidoTrfase_suB_CS"/>
</dbReference>
<dbReference type="InterPro" id="IPR014746">
    <property type="entry name" value="Gln_synth/guanido_kin_cat_dom"/>
</dbReference>
<dbReference type="NCBIfam" id="TIGR00133">
    <property type="entry name" value="gatB"/>
    <property type="match status" value="1"/>
</dbReference>
<dbReference type="NCBIfam" id="NF004012">
    <property type="entry name" value="PRK05477.1-2"/>
    <property type="match status" value="1"/>
</dbReference>
<dbReference type="NCBIfam" id="NF004014">
    <property type="entry name" value="PRK05477.1-4"/>
    <property type="match status" value="1"/>
</dbReference>
<dbReference type="NCBIfam" id="NF004015">
    <property type="entry name" value="PRK05477.1-5"/>
    <property type="match status" value="1"/>
</dbReference>
<dbReference type="PANTHER" id="PTHR11659">
    <property type="entry name" value="GLUTAMYL-TRNA GLN AMIDOTRANSFERASE SUBUNIT B MITOCHONDRIAL AND PROKARYOTIC PET112-RELATED"/>
    <property type="match status" value="1"/>
</dbReference>
<dbReference type="PANTHER" id="PTHR11659:SF0">
    <property type="entry name" value="GLUTAMYL-TRNA(GLN) AMIDOTRANSFERASE SUBUNIT B, MITOCHONDRIAL"/>
    <property type="match status" value="1"/>
</dbReference>
<dbReference type="Pfam" id="PF02934">
    <property type="entry name" value="GatB_N"/>
    <property type="match status" value="1"/>
</dbReference>
<dbReference type="Pfam" id="PF02637">
    <property type="entry name" value="GatB_Yqey"/>
    <property type="match status" value="1"/>
</dbReference>
<dbReference type="SMART" id="SM00845">
    <property type="entry name" value="GatB_Yqey"/>
    <property type="match status" value="1"/>
</dbReference>
<dbReference type="SUPFAM" id="SSF89095">
    <property type="entry name" value="GatB/YqeY motif"/>
    <property type="match status" value="1"/>
</dbReference>
<dbReference type="SUPFAM" id="SSF55931">
    <property type="entry name" value="Glutamine synthetase/guanido kinase"/>
    <property type="match status" value="1"/>
</dbReference>
<dbReference type="PROSITE" id="PS01234">
    <property type="entry name" value="GATB"/>
    <property type="match status" value="1"/>
</dbReference>
<name>GATB_BRASB</name>
<feature type="chain" id="PRO_1000015938" description="Aspartyl/glutamyl-tRNA(Asn/Gln) amidotransferase subunit B">
    <location>
        <begin position="1"/>
        <end position="492"/>
    </location>
</feature>